<gene>
    <name evidence="1" type="primary">treA</name>
    <name type="ordered locus">SCH_1789</name>
</gene>
<feature type="signal peptide" evidence="1">
    <location>
        <begin position="1"/>
        <end position="34"/>
    </location>
</feature>
<feature type="chain" id="PRO_1000064455" description="Periplasmic trehalase">
    <location>
        <begin position="35"/>
        <end position="570"/>
    </location>
</feature>
<feature type="region of interest" description="Disordered" evidence="2">
    <location>
        <begin position="544"/>
        <end position="570"/>
    </location>
</feature>
<feature type="compositionally biased region" description="Low complexity" evidence="2">
    <location>
        <begin position="554"/>
        <end position="570"/>
    </location>
</feature>
<feature type="active site" description="Proton donor/acceptor" evidence="1">
    <location>
        <position position="319"/>
    </location>
</feature>
<feature type="active site" description="Proton donor/acceptor" evidence="1">
    <location>
        <position position="503"/>
    </location>
</feature>
<feature type="binding site" evidence="1">
    <location>
        <position position="159"/>
    </location>
    <ligand>
        <name>substrate</name>
    </ligand>
</feature>
<feature type="binding site" evidence="1">
    <location>
        <begin position="166"/>
        <end position="167"/>
    </location>
    <ligand>
        <name>substrate</name>
    </ligand>
</feature>
<feature type="binding site" evidence="1">
    <location>
        <position position="203"/>
    </location>
    <ligand>
        <name>substrate</name>
    </ligand>
</feature>
<feature type="binding site" evidence="1">
    <location>
        <begin position="212"/>
        <end position="214"/>
    </location>
    <ligand>
        <name>substrate</name>
    </ligand>
</feature>
<feature type="binding site" evidence="1">
    <location>
        <begin position="284"/>
        <end position="286"/>
    </location>
    <ligand>
        <name>substrate</name>
    </ligand>
</feature>
<feature type="binding site" evidence="1">
    <location>
        <position position="317"/>
    </location>
    <ligand>
        <name>substrate</name>
    </ligand>
</feature>
<feature type="binding site" evidence="1">
    <location>
        <position position="518"/>
    </location>
    <ligand>
        <name>substrate</name>
    </ligand>
</feature>
<protein>
    <recommendedName>
        <fullName evidence="1">Periplasmic trehalase</fullName>
        <ecNumber evidence="1">3.2.1.28</ecNumber>
    </recommendedName>
    <alternativeName>
        <fullName evidence="1">Alpha,alpha-trehalase</fullName>
    </alternativeName>
    <alternativeName>
        <fullName evidence="1">Alpha,alpha-trehalose glucohydrolase</fullName>
    </alternativeName>
</protein>
<organism>
    <name type="scientific">Salmonella choleraesuis (strain SC-B67)</name>
    <dbReference type="NCBI Taxonomy" id="321314"/>
    <lineage>
        <taxon>Bacteria</taxon>
        <taxon>Pseudomonadati</taxon>
        <taxon>Pseudomonadota</taxon>
        <taxon>Gammaproteobacteria</taxon>
        <taxon>Enterobacterales</taxon>
        <taxon>Enterobacteriaceae</taxon>
        <taxon>Salmonella</taxon>
    </lineage>
</organism>
<evidence type="ECO:0000255" key="1">
    <source>
        <dbReference type="HAMAP-Rule" id="MF_01060"/>
    </source>
</evidence>
<evidence type="ECO:0000256" key="2">
    <source>
        <dbReference type="SAM" id="MobiDB-lite"/>
    </source>
</evidence>
<reference key="1">
    <citation type="journal article" date="2005" name="Nucleic Acids Res.">
        <title>The genome sequence of Salmonella enterica serovar Choleraesuis, a highly invasive and resistant zoonotic pathogen.</title>
        <authorList>
            <person name="Chiu C.-H."/>
            <person name="Tang P."/>
            <person name="Chu C."/>
            <person name="Hu S."/>
            <person name="Bao Q."/>
            <person name="Yu J."/>
            <person name="Chou Y.-Y."/>
            <person name="Wang H.-S."/>
            <person name="Lee Y.-S."/>
        </authorList>
    </citation>
    <scope>NUCLEOTIDE SEQUENCE [LARGE SCALE GENOMIC DNA]</scope>
    <source>
        <strain>SC-B67</strain>
    </source>
</reference>
<proteinExistence type="inferred from homology"/>
<dbReference type="EC" id="3.2.1.28" evidence="1"/>
<dbReference type="EMBL" id="AE017220">
    <property type="protein sequence ID" value="AAX65695.1"/>
    <property type="molecule type" value="Genomic_DNA"/>
</dbReference>
<dbReference type="RefSeq" id="WP_001540187.1">
    <property type="nucleotide sequence ID" value="NC_006905.1"/>
</dbReference>
<dbReference type="SMR" id="Q57NL6"/>
<dbReference type="CAZy" id="GH37">
    <property type="family name" value="Glycoside Hydrolase Family 37"/>
</dbReference>
<dbReference type="KEGG" id="sec:SCH_1789"/>
<dbReference type="HOGENOM" id="CLU_006451_3_1_6"/>
<dbReference type="Proteomes" id="UP000000538">
    <property type="component" value="Chromosome"/>
</dbReference>
<dbReference type="GO" id="GO:0042597">
    <property type="term" value="C:periplasmic space"/>
    <property type="evidence" value="ECO:0007669"/>
    <property type="project" value="UniProtKB-SubCell"/>
</dbReference>
<dbReference type="GO" id="GO:0004555">
    <property type="term" value="F:alpha,alpha-trehalase activity"/>
    <property type="evidence" value="ECO:0007669"/>
    <property type="project" value="UniProtKB-UniRule"/>
</dbReference>
<dbReference type="GO" id="GO:0071474">
    <property type="term" value="P:cellular hyperosmotic response"/>
    <property type="evidence" value="ECO:0007669"/>
    <property type="project" value="InterPro"/>
</dbReference>
<dbReference type="GO" id="GO:0005993">
    <property type="term" value="P:trehalose catabolic process"/>
    <property type="evidence" value="ECO:0007669"/>
    <property type="project" value="InterPro"/>
</dbReference>
<dbReference type="FunFam" id="1.50.10.10:FF:000003">
    <property type="entry name" value="Cytoplasmic trehalase"/>
    <property type="match status" value="1"/>
</dbReference>
<dbReference type="Gene3D" id="1.50.10.10">
    <property type="match status" value="1"/>
</dbReference>
<dbReference type="HAMAP" id="MF_01060">
    <property type="entry name" value="Peripl_trehalase"/>
    <property type="match status" value="1"/>
</dbReference>
<dbReference type="InterPro" id="IPR008928">
    <property type="entry name" value="6-hairpin_glycosidase_sf"/>
</dbReference>
<dbReference type="InterPro" id="IPR012341">
    <property type="entry name" value="6hp_glycosidase-like_sf"/>
</dbReference>
<dbReference type="InterPro" id="IPR001661">
    <property type="entry name" value="Glyco_hydro_37"/>
</dbReference>
<dbReference type="InterPro" id="IPR018232">
    <property type="entry name" value="Glyco_hydro_37_CS"/>
</dbReference>
<dbReference type="InterPro" id="IPR023720">
    <property type="entry name" value="Trehalase_periplasmic"/>
</dbReference>
<dbReference type="NCBIfam" id="NF009773">
    <property type="entry name" value="PRK13270.1"/>
    <property type="match status" value="1"/>
</dbReference>
<dbReference type="NCBIfam" id="NF009774">
    <property type="entry name" value="PRK13271.1"/>
    <property type="match status" value="1"/>
</dbReference>
<dbReference type="PANTHER" id="PTHR23403">
    <property type="entry name" value="TREHALASE"/>
    <property type="match status" value="1"/>
</dbReference>
<dbReference type="PANTHER" id="PTHR23403:SF1">
    <property type="entry name" value="TREHALASE"/>
    <property type="match status" value="1"/>
</dbReference>
<dbReference type="Pfam" id="PF01204">
    <property type="entry name" value="Trehalase"/>
    <property type="match status" value="1"/>
</dbReference>
<dbReference type="PRINTS" id="PR00744">
    <property type="entry name" value="GLHYDRLASE37"/>
</dbReference>
<dbReference type="SUPFAM" id="SSF48208">
    <property type="entry name" value="Six-hairpin glycosidases"/>
    <property type="match status" value="1"/>
</dbReference>
<dbReference type="PROSITE" id="PS00927">
    <property type="entry name" value="TREHALASE_1"/>
    <property type="match status" value="1"/>
</dbReference>
<dbReference type="PROSITE" id="PS00928">
    <property type="entry name" value="TREHALASE_2"/>
    <property type="match status" value="1"/>
</dbReference>
<sequence length="570" mass="63557">MIPPEIRRSVLLQKAIKLALAGTLLTFASFSATAADPSSDTETPQPPDILLGPLFNDVQNAKLLPDQKTFADAIPNSDPLMILADYRMQRNQSGFDLRHFVDVNFTLPKAGEKYVPPAGQSLREHIDGLWPVLTRSTKNVKKWDSLLPLPESYVVPGGRFREIYYWDSYFTMLGLAESGHWDKVADMVANFGYEIDAWGHIPNGNRTYYLSRSQPPFFAFMVELLAQHEGDDALKEYLPQLQKEYAYWMEGVETLQPGQQNQRVVKLEDGSVLNRYWDDRDTPRPESWVEDIATAKSNPNRPATEIYRDLRSAAASGWDFSSRWMDNPQQLSTIRTTTIVPVDLNALLYQLEKTLARASAAAGDRAKASQYDALANARQKAIEMHLWNNKEGWYADYDLQNNKIRDQLTAAALFPLYVNAAAKDRAAKVAAAAQAHQLQPGGLATTSVKSGQQWDAPNGWAPLQWVAAEGLQNYGQDDVAMEVTWRFLTNVQHTYDREKKLVEKYDVSSTGTGGGGGEYPLQDGFGWTNGVTLKMLDLICPQEKPCDSVPSTRPASLSATPTKTPSAATQ</sequence>
<name>TREA_SALCH</name>
<accession>Q57NL6</accession>
<keyword id="KW-0326">Glycosidase</keyword>
<keyword id="KW-0378">Hydrolase</keyword>
<keyword id="KW-0574">Periplasm</keyword>
<keyword id="KW-0732">Signal</keyword>
<comment type="function">
    <text evidence="1">Provides the cells with the ability to utilize trehalose at high osmolarity by splitting it into glucose molecules that can subsequently be taken up by the phosphotransferase-mediated uptake system.</text>
</comment>
<comment type="catalytic activity">
    <reaction evidence="1">
        <text>alpha,alpha-trehalose + H2O = alpha-D-glucose + beta-D-glucose</text>
        <dbReference type="Rhea" id="RHEA:32675"/>
        <dbReference type="ChEBI" id="CHEBI:15377"/>
        <dbReference type="ChEBI" id="CHEBI:15903"/>
        <dbReference type="ChEBI" id="CHEBI:16551"/>
        <dbReference type="ChEBI" id="CHEBI:17925"/>
        <dbReference type="EC" id="3.2.1.28"/>
    </reaction>
</comment>
<comment type="subunit">
    <text evidence="1">Monomer.</text>
</comment>
<comment type="subcellular location">
    <subcellularLocation>
        <location evidence="1">Periplasm</location>
    </subcellularLocation>
</comment>
<comment type="similarity">
    <text evidence="1">Belongs to the glycosyl hydrolase 37 family.</text>
</comment>